<reference key="1">
    <citation type="journal article" date="2002" name="Nature">
        <title>The genome sequence of Schizosaccharomyces pombe.</title>
        <authorList>
            <person name="Wood V."/>
            <person name="Gwilliam R."/>
            <person name="Rajandream M.A."/>
            <person name="Lyne M.H."/>
            <person name="Lyne R."/>
            <person name="Stewart A."/>
            <person name="Sgouros J.G."/>
            <person name="Peat N."/>
            <person name="Hayles J."/>
            <person name="Baker S.G."/>
            <person name="Basham D."/>
            <person name="Bowman S."/>
            <person name="Brooks K."/>
            <person name="Brown D."/>
            <person name="Brown S."/>
            <person name="Chillingworth T."/>
            <person name="Churcher C.M."/>
            <person name="Collins M."/>
            <person name="Connor R."/>
            <person name="Cronin A."/>
            <person name="Davis P."/>
            <person name="Feltwell T."/>
            <person name="Fraser A."/>
            <person name="Gentles S."/>
            <person name="Goble A."/>
            <person name="Hamlin N."/>
            <person name="Harris D.E."/>
            <person name="Hidalgo J."/>
            <person name="Hodgson G."/>
            <person name="Holroyd S."/>
            <person name="Hornsby T."/>
            <person name="Howarth S."/>
            <person name="Huckle E.J."/>
            <person name="Hunt S."/>
            <person name="Jagels K."/>
            <person name="James K.D."/>
            <person name="Jones L."/>
            <person name="Jones M."/>
            <person name="Leather S."/>
            <person name="McDonald S."/>
            <person name="McLean J."/>
            <person name="Mooney P."/>
            <person name="Moule S."/>
            <person name="Mungall K.L."/>
            <person name="Murphy L.D."/>
            <person name="Niblett D."/>
            <person name="Odell C."/>
            <person name="Oliver K."/>
            <person name="O'Neil S."/>
            <person name="Pearson D."/>
            <person name="Quail M.A."/>
            <person name="Rabbinowitsch E."/>
            <person name="Rutherford K.M."/>
            <person name="Rutter S."/>
            <person name="Saunders D."/>
            <person name="Seeger K."/>
            <person name="Sharp S."/>
            <person name="Skelton J."/>
            <person name="Simmonds M.N."/>
            <person name="Squares R."/>
            <person name="Squares S."/>
            <person name="Stevens K."/>
            <person name="Taylor K."/>
            <person name="Taylor R.G."/>
            <person name="Tivey A."/>
            <person name="Walsh S.V."/>
            <person name="Warren T."/>
            <person name="Whitehead S."/>
            <person name="Woodward J.R."/>
            <person name="Volckaert G."/>
            <person name="Aert R."/>
            <person name="Robben J."/>
            <person name="Grymonprez B."/>
            <person name="Weltjens I."/>
            <person name="Vanstreels E."/>
            <person name="Rieger M."/>
            <person name="Schaefer M."/>
            <person name="Mueller-Auer S."/>
            <person name="Gabel C."/>
            <person name="Fuchs M."/>
            <person name="Duesterhoeft A."/>
            <person name="Fritzc C."/>
            <person name="Holzer E."/>
            <person name="Moestl D."/>
            <person name="Hilbert H."/>
            <person name="Borzym K."/>
            <person name="Langer I."/>
            <person name="Beck A."/>
            <person name="Lehrach H."/>
            <person name="Reinhardt R."/>
            <person name="Pohl T.M."/>
            <person name="Eger P."/>
            <person name="Zimmermann W."/>
            <person name="Wedler H."/>
            <person name="Wambutt R."/>
            <person name="Purnelle B."/>
            <person name="Goffeau A."/>
            <person name="Cadieu E."/>
            <person name="Dreano S."/>
            <person name="Gloux S."/>
            <person name="Lelaure V."/>
            <person name="Mottier S."/>
            <person name="Galibert F."/>
            <person name="Aves S.J."/>
            <person name="Xiang Z."/>
            <person name="Hunt C."/>
            <person name="Moore K."/>
            <person name="Hurst S.M."/>
            <person name="Lucas M."/>
            <person name="Rochet M."/>
            <person name="Gaillardin C."/>
            <person name="Tallada V.A."/>
            <person name="Garzon A."/>
            <person name="Thode G."/>
            <person name="Daga R.R."/>
            <person name="Cruzado L."/>
            <person name="Jimenez J."/>
            <person name="Sanchez M."/>
            <person name="del Rey F."/>
            <person name="Benito J."/>
            <person name="Dominguez A."/>
            <person name="Revuelta J.L."/>
            <person name="Moreno S."/>
            <person name="Armstrong J."/>
            <person name="Forsburg S.L."/>
            <person name="Cerutti L."/>
            <person name="Lowe T."/>
            <person name="McCombie W.R."/>
            <person name="Paulsen I."/>
            <person name="Potashkin J."/>
            <person name="Shpakovski G.V."/>
            <person name="Ussery D."/>
            <person name="Barrell B.G."/>
            <person name="Nurse P."/>
        </authorList>
    </citation>
    <scope>NUCLEOTIDE SEQUENCE [LARGE SCALE GENOMIC DNA]</scope>
    <source>
        <strain>972 / ATCC 24843</strain>
    </source>
</reference>
<reference key="2">
    <citation type="journal article" date="2006" name="Nat. Biotechnol.">
        <title>ORFeome cloning and global analysis of protein localization in the fission yeast Schizosaccharomyces pombe.</title>
        <authorList>
            <person name="Matsuyama A."/>
            <person name="Arai R."/>
            <person name="Yashiroda Y."/>
            <person name="Shirai A."/>
            <person name="Kamata A."/>
            <person name="Sekido S."/>
            <person name="Kobayashi Y."/>
            <person name="Hashimoto A."/>
            <person name="Hamamoto M."/>
            <person name="Hiraoka Y."/>
            <person name="Horinouchi S."/>
            <person name="Yoshida M."/>
        </authorList>
    </citation>
    <scope>SUBCELLULAR LOCATION [LARGE SCALE ANALYSIS]</scope>
</reference>
<accession>O94264</accession>
<proteinExistence type="predicted"/>
<name>YORF_SCHPO</name>
<protein>
    <recommendedName>
        <fullName>Uncharacterized RING finger protein P8B7.15c</fullName>
    </recommendedName>
</protein>
<comment type="subcellular location">
    <subcellularLocation>
        <location evidence="5">Nucleus</location>
    </subcellularLocation>
</comment>
<evidence type="ECO:0000255" key="1">
    <source>
        <dbReference type="PROSITE-ProRule" id="PRU00047"/>
    </source>
</evidence>
<evidence type="ECO:0000255" key="2">
    <source>
        <dbReference type="PROSITE-ProRule" id="PRU00175"/>
    </source>
</evidence>
<evidence type="ECO:0000255" key="3">
    <source>
        <dbReference type="PROSITE-ProRule" id="PRU00612"/>
    </source>
</evidence>
<evidence type="ECO:0000256" key="4">
    <source>
        <dbReference type="SAM" id="MobiDB-lite"/>
    </source>
</evidence>
<evidence type="ECO:0000269" key="5">
    <source>
    </source>
</evidence>
<gene>
    <name type="ORF">SPBP8B7.15c</name>
</gene>
<dbReference type="EMBL" id="CU329671">
    <property type="protein sequence ID" value="CAA21800.1"/>
    <property type="molecule type" value="Genomic_DNA"/>
</dbReference>
<dbReference type="PIR" id="T40809">
    <property type="entry name" value="T40809"/>
</dbReference>
<dbReference type="RefSeq" id="NP_596522.1">
    <property type="nucleotide sequence ID" value="NM_001022443.2"/>
</dbReference>
<dbReference type="SMR" id="O94264"/>
<dbReference type="BioGRID" id="277896">
    <property type="interactions" value="2"/>
</dbReference>
<dbReference type="FunCoup" id="O94264">
    <property type="interactions" value="351"/>
</dbReference>
<dbReference type="STRING" id="284812.O94264"/>
<dbReference type="iPTMnet" id="O94264"/>
<dbReference type="PaxDb" id="4896-SPBP8B7.15c.1"/>
<dbReference type="EnsemblFungi" id="SPBP8B7.15c.1">
    <property type="protein sequence ID" value="SPBP8B7.15c.1:pep"/>
    <property type="gene ID" value="SPBP8B7.15c"/>
</dbReference>
<dbReference type="PomBase" id="SPBP8B7.15c"/>
<dbReference type="VEuPathDB" id="FungiDB:SPBP8B7.15c"/>
<dbReference type="eggNOG" id="KOG0314">
    <property type="taxonomic scope" value="Eukaryota"/>
</dbReference>
<dbReference type="HOGENOM" id="CLU_019105_0_0_1"/>
<dbReference type="InParanoid" id="O94264"/>
<dbReference type="OMA" id="NVPDHEP"/>
<dbReference type="PhylomeDB" id="O94264"/>
<dbReference type="Reactome" id="R-SPO-983168">
    <property type="pathway name" value="Antigen processing: Ubiquitination &amp; Proteasome degradation"/>
</dbReference>
<dbReference type="PRO" id="PR:O94264"/>
<dbReference type="Proteomes" id="UP000002485">
    <property type="component" value="Chromosome II"/>
</dbReference>
<dbReference type="GO" id="GO:0005634">
    <property type="term" value="C:nucleus"/>
    <property type="evidence" value="ECO:0007005"/>
    <property type="project" value="PomBase"/>
</dbReference>
<dbReference type="GO" id="GO:0003676">
    <property type="term" value="F:nucleic acid binding"/>
    <property type="evidence" value="ECO:0007669"/>
    <property type="project" value="InterPro"/>
</dbReference>
<dbReference type="GO" id="GO:0061630">
    <property type="term" value="F:ubiquitin protein ligase activity"/>
    <property type="evidence" value="ECO:0000318"/>
    <property type="project" value="GO_Central"/>
</dbReference>
<dbReference type="GO" id="GO:0008270">
    <property type="term" value="F:zinc ion binding"/>
    <property type="evidence" value="ECO:0007669"/>
    <property type="project" value="UniProtKB-KW"/>
</dbReference>
<dbReference type="GO" id="GO:0180010">
    <property type="term" value="P:co-transcriptional mRNA 3'-end processing, cleavage and polyadenylation pathway"/>
    <property type="evidence" value="ECO:0000266"/>
    <property type="project" value="PomBase"/>
</dbReference>
<dbReference type="GO" id="GO:0016567">
    <property type="term" value="P:protein ubiquitination"/>
    <property type="evidence" value="ECO:0000318"/>
    <property type="project" value="GO_Central"/>
</dbReference>
<dbReference type="GO" id="GO:0006511">
    <property type="term" value="P:ubiquitin-dependent protein catabolic process"/>
    <property type="evidence" value="ECO:0000318"/>
    <property type="project" value="GO_Central"/>
</dbReference>
<dbReference type="CDD" id="cd16620">
    <property type="entry name" value="vRING-HC-C4C4_RBBP6"/>
    <property type="match status" value="1"/>
</dbReference>
<dbReference type="FunFam" id="4.10.60.10:FF:000005">
    <property type="entry name" value="E3 ubiquitin-protein ligase RBBP6"/>
    <property type="match status" value="1"/>
</dbReference>
<dbReference type="FunFam" id="3.10.20.90:FF:000070">
    <property type="entry name" value="E3 ubiquitin-protein ligase RBBP6 isoform X2"/>
    <property type="match status" value="1"/>
</dbReference>
<dbReference type="Gene3D" id="3.10.20.90">
    <property type="entry name" value="Phosphatidylinositol 3-kinase Catalytic Subunit, Chain A, domain 1"/>
    <property type="match status" value="1"/>
</dbReference>
<dbReference type="Gene3D" id="4.10.60.10">
    <property type="entry name" value="Zinc finger, CCHC-type"/>
    <property type="match status" value="1"/>
</dbReference>
<dbReference type="Gene3D" id="3.30.40.10">
    <property type="entry name" value="Zinc/RING finger domain, C3HC4 (zinc finger)"/>
    <property type="match status" value="1"/>
</dbReference>
<dbReference type="InterPro" id="IPR014891">
    <property type="entry name" value="DWNN_domain"/>
</dbReference>
<dbReference type="InterPro" id="IPR033489">
    <property type="entry name" value="RBBP6"/>
</dbReference>
<dbReference type="InterPro" id="IPR025829">
    <property type="entry name" value="Zn_knuckle_CX2CX3GHX4C"/>
</dbReference>
<dbReference type="InterPro" id="IPR001878">
    <property type="entry name" value="Znf_CCHC"/>
</dbReference>
<dbReference type="InterPro" id="IPR036875">
    <property type="entry name" value="Znf_CCHC_sf"/>
</dbReference>
<dbReference type="InterPro" id="IPR001841">
    <property type="entry name" value="Znf_RING"/>
</dbReference>
<dbReference type="InterPro" id="IPR013083">
    <property type="entry name" value="Znf_RING/FYVE/PHD"/>
</dbReference>
<dbReference type="PANTHER" id="PTHR15439:SF0">
    <property type="entry name" value="CELL DIVISION CYCLE AND APOPTOSIS REGULATOR PROTEIN 1-RELATED"/>
    <property type="match status" value="1"/>
</dbReference>
<dbReference type="PANTHER" id="PTHR15439">
    <property type="entry name" value="RETINOBLASTOMA-BINDING PROTEIN 6"/>
    <property type="match status" value="1"/>
</dbReference>
<dbReference type="Pfam" id="PF08783">
    <property type="entry name" value="DWNN"/>
    <property type="match status" value="1"/>
</dbReference>
<dbReference type="Pfam" id="PF13696">
    <property type="entry name" value="zf-CCHC_2"/>
    <property type="match status" value="1"/>
</dbReference>
<dbReference type="SMART" id="SM01180">
    <property type="entry name" value="DWNN"/>
    <property type="match status" value="1"/>
</dbReference>
<dbReference type="SMART" id="SM00343">
    <property type="entry name" value="ZnF_C2HC"/>
    <property type="match status" value="1"/>
</dbReference>
<dbReference type="SUPFAM" id="SSF57756">
    <property type="entry name" value="Retrovirus zinc finger-like domains"/>
    <property type="match status" value="1"/>
</dbReference>
<dbReference type="SUPFAM" id="SSF57850">
    <property type="entry name" value="RING/U-box"/>
    <property type="match status" value="1"/>
</dbReference>
<dbReference type="PROSITE" id="PS51282">
    <property type="entry name" value="DWNN"/>
    <property type="match status" value="1"/>
</dbReference>
<dbReference type="PROSITE" id="PS50158">
    <property type="entry name" value="ZF_CCHC"/>
    <property type="match status" value="1"/>
</dbReference>
<dbReference type="PROSITE" id="PS50089">
    <property type="entry name" value="ZF_RING_2"/>
    <property type="match status" value="1"/>
</dbReference>
<feature type="chain" id="PRO_0000310491" description="Uncharacterized RING finger protein P8B7.15c">
    <location>
        <begin position="1"/>
        <end position="482"/>
    </location>
</feature>
<feature type="domain" description="DWNN" evidence="3">
    <location>
        <begin position="5"/>
        <end position="79"/>
    </location>
</feature>
<feature type="zinc finger region" description="CCHC-type" evidence="1">
    <location>
        <begin position="183"/>
        <end position="200"/>
    </location>
</feature>
<feature type="zinc finger region" description="RING-type; degenerate" evidence="2">
    <location>
        <begin position="282"/>
        <end position="322"/>
    </location>
</feature>
<feature type="region of interest" description="Disordered" evidence="4">
    <location>
        <begin position="86"/>
        <end position="108"/>
    </location>
</feature>
<feature type="region of interest" description="Disordered" evidence="4">
    <location>
        <begin position="346"/>
        <end position="393"/>
    </location>
</feature>
<feature type="region of interest" description="Disordered" evidence="4">
    <location>
        <begin position="447"/>
        <end position="482"/>
    </location>
</feature>
<feature type="compositionally biased region" description="Low complexity" evidence="4">
    <location>
        <begin position="451"/>
        <end position="466"/>
    </location>
</feature>
<organism>
    <name type="scientific">Schizosaccharomyces pombe (strain 972 / ATCC 24843)</name>
    <name type="common">Fission yeast</name>
    <dbReference type="NCBI Taxonomy" id="284812"/>
    <lineage>
        <taxon>Eukaryota</taxon>
        <taxon>Fungi</taxon>
        <taxon>Dikarya</taxon>
        <taxon>Ascomycota</taxon>
        <taxon>Taphrinomycotina</taxon>
        <taxon>Schizosaccharomycetes</taxon>
        <taxon>Schizosaccharomycetales</taxon>
        <taxon>Schizosaccharomycetaceae</taxon>
        <taxon>Schizosaccharomyces</taxon>
    </lineage>
</organism>
<sequence>MSGVIYYKFKSQKDPSRITFDGTIGMSVFDVKREIIMQKKLGNGLDFDLLLYNANSNEEYDDDTFIIPRSTSVIVRRVPAQKSGKGTAARYVSGAPKTTGARSDSVKRPVPMLQKKAPITSGESNINKSPSSSEDAAIQQMFQVSSDQWRETQDKMASATPIYKPNQRRIAASVPDKPPPPGYICYRCGQKGHWIQACPTNADPNYDGKPRVKRTTGIPRSFLKNVERPAEGDAANIMINAEGDYVVVQPDVASWETYQSRKAALTANDVYKMQPPNISLACTLCKKLARNACRTPCCDKLFCEECIQTALLDSDFECPNCHRKDVLLDTLNPDYQKQREIEAVVKSVLGSNSKNSDKVGTSDDNNTPMSEKRKREDDDANGPNKFAARSSAVFSKATAEPAFKSAMAIPDMPSMPHVQGFPAPFPPFMMPGLPQMPPMMMNAIAGQVYHNNRNPPRTNSRPSNASVPPPSSLHKNPPTKTN</sequence>
<keyword id="KW-0479">Metal-binding</keyword>
<keyword id="KW-0539">Nucleus</keyword>
<keyword id="KW-1185">Reference proteome</keyword>
<keyword id="KW-0862">Zinc</keyword>
<keyword id="KW-0863">Zinc-finger</keyword>